<reference key="1">
    <citation type="journal article" date="2007" name="PLoS Genet.">
        <title>Patterns and implications of gene gain and loss in the evolution of Prochlorococcus.</title>
        <authorList>
            <person name="Kettler G.C."/>
            <person name="Martiny A.C."/>
            <person name="Huang K."/>
            <person name="Zucker J."/>
            <person name="Coleman M.L."/>
            <person name="Rodrigue S."/>
            <person name="Chen F."/>
            <person name="Lapidus A."/>
            <person name="Ferriera S."/>
            <person name="Johnson J."/>
            <person name="Steglich C."/>
            <person name="Church G.M."/>
            <person name="Richardson P."/>
            <person name="Chisholm S.W."/>
        </authorList>
    </citation>
    <scope>NUCLEOTIDE SEQUENCE [LARGE SCALE GENOMIC DNA]</scope>
    <source>
        <strain>NATL2A</strain>
    </source>
</reference>
<sequence>MKQLQVLLVAGTHGNEINGIWLFDEWKKSSFLINTHGIKTFKVIGNPEAKKAGKRYIHHDLNRSFKEESFIKINPLNCERTRASELVNLYGEAGENPCQIALDFHTTTASMGSCIVVYGRRDADLALASLIQNQLGLPVYLHESDQKQTGFLVESWPCGLVVEIGPIGQGLLNSRIISQTKLILETLMEQIHEVKNLNLFFPNKLIIHRHIKSIDFPRDEEGNIDGYVHSLRQSKDWQELKKNDELFCKLNGEIIRFEEDEPYIPVFINEAAYVEKNIAMSFTKRELWNFKKEWKQALIDLIHQK</sequence>
<comment type="catalytic activity">
    <reaction evidence="1">
        <text>an N-acyl-L-aspartate + H2O = a carboxylate + L-aspartate</text>
        <dbReference type="Rhea" id="RHEA:10872"/>
        <dbReference type="ChEBI" id="CHEBI:15377"/>
        <dbReference type="ChEBI" id="CHEBI:29067"/>
        <dbReference type="ChEBI" id="CHEBI:29991"/>
        <dbReference type="ChEBI" id="CHEBI:58497"/>
        <dbReference type="EC" id="3.5.1.15"/>
    </reaction>
</comment>
<comment type="cofactor">
    <cofactor evidence="1">
        <name>Zn(2+)</name>
        <dbReference type="ChEBI" id="CHEBI:29105"/>
    </cofactor>
    <text evidence="1">Binds 1 zinc ion per subunit.</text>
</comment>
<comment type="similarity">
    <text evidence="1">Belongs to the AspA/AstE family. Aspartoacylase subfamily.</text>
</comment>
<name>ASPA_PROMT</name>
<evidence type="ECO:0000255" key="1">
    <source>
        <dbReference type="HAMAP-Rule" id="MF_00704"/>
    </source>
</evidence>
<accession>Q46HE9</accession>
<feature type="chain" id="PRO_1000147942" description="Probable aspartoacylase">
    <location>
        <begin position="1"/>
        <end position="305"/>
    </location>
</feature>
<feature type="binding site" evidence="1">
    <location>
        <position position="13"/>
    </location>
    <ligand>
        <name>Zn(2+)</name>
        <dbReference type="ChEBI" id="CHEBI:29105"/>
    </ligand>
</feature>
<feature type="binding site" evidence="1">
    <location>
        <position position="16"/>
    </location>
    <ligand>
        <name>Zn(2+)</name>
        <dbReference type="ChEBI" id="CHEBI:29105"/>
    </ligand>
</feature>
<feature type="binding site" evidence="1">
    <location>
        <position position="55"/>
    </location>
    <ligand>
        <name>substrate</name>
    </ligand>
</feature>
<feature type="binding site" evidence="1">
    <location>
        <begin position="62"/>
        <end position="63"/>
    </location>
    <ligand>
        <name>substrate</name>
    </ligand>
</feature>
<feature type="binding site" evidence="1">
    <location>
        <position position="105"/>
    </location>
    <ligand>
        <name>Zn(2+)</name>
        <dbReference type="ChEBI" id="CHEBI:29105"/>
    </ligand>
</feature>
<feature type="binding site" evidence="1">
    <location>
        <position position="163"/>
    </location>
    <ligand>
        <name>substrate</name>
    </ligand>
</feature>
<feature type="binding site" evidence="1">
    <location>
        <position position="273"/>
    </location>
    <ligand>
        <name>substrate</name>
    </ligand>
</feature>
<dbReference type="EC" id="3.5.1.15" evidence="1"/>
<dbReference type="EMBL" id="CP000095">
    <property type="protein sequence ID" value="AAZ59079.1"/>
    <property type="molecule type" value="Genomic_DNA"/>
</dbReference>
<dbReference type="RefSeq" id="WP_011294224.1">
    <property type="nucleotide sequence ID" value="NC_007335.2"/>
</dbReference>
<dbReference type="SMR" id="Q46HE9"/>
<dbReference type="STRING" id="59920.PMN2A_1591"/>
<dbReference type="KEGG" id="pmn:PMN2A_1591"/>
<dbReference type="HOGENOM" id="CLU_083292_0_0_3"/>
<dbReference type="OrthoDB" id="531770at2"/>
<dbReference type="PhylomeDB" id="Q46HE9"/>
<dbReference type="Proteomes" id="UP000002535">
    <property type="component" value="Chromosome"/>
</dbReference>
<dbReference type="GO" id="GO:0005829">
    <property type="term" value="C:cytosol"/>
    <property type="evidence" value="ECO:0007669"/>
    <property type="project" value="TreeGrafter"/>
</dbReference>
<dbReference type="GO" id="GO:0019807">
    <property type="term" value="F:aspartoacylase activity"/>
    <property type="evidence" value="ECO:0007669"/>
    <property type="project" value="UniProtKB-UniRule"/>
</dbReference>
<dbReference type="GO" id="GO:0016788">
    <property type="term" value="F:hydrolase activity, acting on ester bonds"/>
    <property type="evidence" value="ECO:0007669"/>
    <property type="project" value="InterPro"/>
</dbReference>
<dbReference type="GO" id="GO:0008270">
    <property type="term" value="F:zinc ion binding"/>
    <property type="evidence" value="ECO:0007669"/>
    <property type="project" value="UniProtKB-UniRule"/>
</dbReference>
<dbReference type="Gene3D" id="2.20.25.160">
    <property type="match status" value="1"/>
</dbReference>
<dbReference type="Gene3D" id="3.40.630.10">
    <property type="entry name" value="Zn peptidases"/>
    <property type="match status" value="1"/>
</dbReference>
<dbReference type="HAMAP" id="MF_00704">
    <property type="entry name" value="Aspartoacylase"/>
    <property type="match status" value="1"/>
</dbReference>
<dbReference type="InterPro" id="IPR050178">
    <property type="entry name" value="AspA/AstE_fam"/>
</dbReference>
<dbReference type="InterPro" id="IPR016708">
    <property type="entry name" value="Aspartoacylase"/>
</dbReference>
<dbReference type="InterPro" id="IPR055438">
    <property type="entry name" value="AstE_AspA_cat"/>
</dbReference>
<dbReference type="InterPro" id="IPR007036">
    <property type="entry name" value="Aste_AspA_hybrid_dom"/>
</dbReference>
<dbReference type="NCBIfam" id="NF002601">
    <property type="entry name" value="PRK02259.1"/>
    <property type="match status" value="1"/>
</dbReference>
<dbReference type="PANTHER" id="PTHR15162">
    <property type="entry name" value="ASPARTOACYLASE"/>
    <property type="match status" value="1"/>
</dbReference>
<dbReference type="PANTHER" id="PTHR15162:SF7">
    <property type="entry name" value="SUCCINYLGLUTAMATE DESUCCINYLASE"/>
    <property type="match status" value="1"/>
</dbReference>
<dbReference type="Pfam" id="PF24827">
    <property type="entry name" value="AstE_AspA_cat"/>
    <property type="match status" value="1"/>
</dbReference>
<dbReference type="Pfam" id="PF04952">
    <property type="entry name" value="AstE_AspA_hybrid"/>
    <property type="match status" value="1"/>
</dbReference>
<dbReference type="PIRSF" id="PIRSF018001">
    <property type="entry name" value="Aspartoacylase"/>
    <property type="match status" value="1"/>
</dbReference>
<dbReference type="SUPFAM" id="SSF53187">
    <property type="entry name" value="Zn-dependent exopeptidases"/>
    <property type="match status" value="1"/>
</dbReference>
<organism>
    <name type="scientific">Prochlorococcus marinus (strain NATL2A)</name>
    <dbReference type="NCBI Taxonomy" id="59920"/>
    <lineage>
        <taxon>Bacteria</taxon>
        <taxon>Bacillati</taxon>
        <taxon>Cyanobacteriota</taxon>
        <taxon>Cyanophyceae</taxon>
        <taxon>Synechococcales</taxon>
        <taxon>Prochlorococcaceae</taxon>
        <taxon>Prochlorococcus</taxon>
    </lineage>
</organism>
<gene>
    <name type="ordered locus">PMN2A_1591</name>
</gene>
<proteinExistence type="inferred from homology"/>
<protein>
    <recommendedName>
        <fullName evidence="1">Probable aspartoacylase</fullName>
        <ecNumber evidence="1">3.5.1.15</ecNumber>
    </recommendedName>
</protein>
<keyword id="KW-0378">Hydrolase</keyword>
<keyword id="KW-0479">Metal-binding</keyword>
<keyword id="KW-1185">Reference proteome</keyword>
<keyword id="KW-0862">Zinc</keyword>